<keyword id="KW-0997">Cell inner membrane</keyword>
<keyword id="KW-1003">Cell membrane</keyword>
<keyword id="KW-0143">Chaperone</keyword>
<keyword id="KW-1015">Disulfide bond</keyword>
<keyword id="KW-0249">Electron transport</keyword>
<keyword id="KW-0472">Membrane</keyword>
<keyword id="KW-0560">Oxidoreductase</keyword>
<keyword id="KW-0676">Redox-active center</keyword>
<keyword id="KW-1185">Reference proteome</keyword>
<keyword id="KW-0812">Transmembrane</keyword>
<keyword id="KW-1133">Transmembrane helix</keyword>
<keyword id="KW-0813">Transport</keyword>
<comment type="function">
    <text evidence="1">Required for disulfide bond formation in some periplasmic proteins. Acts by oxidizing the DsbA protein.</text>
</comment>
<comment type="subcellular location">
    <subcellularLocation>
        <location evidence="1">Cell inner membrane</location>
        <topology evidence="1">Multi-pass membrane protein</topology>
    </subcellularLocation>
</comment>
<comment type="similarity">
    <text evidence="1">Belongs to the DsbB family.</text>
</comment>
<comment type="sequence caution" evidence="2">
    <conflict type="erroneous initiation">
        <sequence resource="EMBL-CDS" id="AAW74233"/>
    </conflict>
</comment>
<name>DSBB_XANOR</name>
<feature type="chain" id="PRO_0000298423" description="Disulfide bond formation protein B">
    <location>
        <begin position="1"/>
        <end position="172"/>
    </location>
</feature>
<feature type="topological domain" description="Cytoplasmic" evidence="1">
    <location>
        <begin position="1"/>
        <end position="11"/>
    </location>
</feature>
<feature type="transmembrane region" description="Helical" evidence="1">
    <location>
        <begin position="12"/>
        <end position="28"/>
    </location>
</feature>
<feature type="topological domain" description="Periplasmic" evidence="1">
    <location>
        <begin position="29"/>
        <end position="46"/>
    </location>
</feature>
<feature type="transmembrane region" description="Helical" evidence="1">
    <location>
        <begin position="47"/>
        <end position="63"/>
    </location>
</feature>
<feature type="topological domain" description="Cytoplasmic" evidence="1">
    <location>
        <begin position="64"/>
        <end position="70"/>
    </location>
</feature>
<feature type="transmembrane region" description="Helical" evidence="1">
    <location>
        <begin position="71"/>
        <end position="88"/>
    </location>
</feature>
<feature type="topological domain" description="Periplasmic" evidence="1">
    <location>
        <begin position="89"/>
        <end position="145"/>
    </location>
</feature>
<feature type="transmembrane region" description="Helical" evidence="1">
    <location>
        <begin position="146"/>
        <end position="164"/>
    </location>
</feature>
<feature type="topological domain" description="Cytoplasmic" evidence="1">
    <location>
        <begin position="165"/>
        <end position="172"/>
    </location>
</feature>
<feature type="disulfide bond" description="Redox-active" evidence="1">
    <location>
        <begin position="38"/>
        <end position="41"/>
    </location>
</feature>
<feature type="disulfide bond" description="Redox-active" evidence="1">
    <location>
        <begin position="104"/>
        <end position="131"/>
    </location>
</feature>
<dbReference type="EMBL" id="AE013598">
    <property type="protein sequence ID" value="AAW74233.1"/>
    <property type="status" value="ALT_INIT"/>
    <property type="molecule type" value="Genomic_DNA"/>
</dbReference>
<dbReference type="SMR" id="Q5H488"/>
<dbReference type="STRING" id="291331.XOO0979"/>
<dbReference type="KEGG" id="xoo:XOO0979"/>
<dbReference type="HOGENOM" id="CLU_098660_1_1_6"/>
<dbReference type="Proteomes" id="UP000006735">
    <property type="component" value="Chromosome"/>
</dbReference>
<dbReference type="GO" id="GO:0005886">
    <property type="term" value="C:plasma membrane"/>
    <property type="evidence" value="ECO:0007669"/>
    <property type="project" value="UniProtKB-SubCell"/>
</dbReference>
<dbReference type="GO" id="GO:0009055">
    <property type="term" value="F:electron transfer activity"/>
    <property type="evidence" value="ECO:0007669"/>
    <property type="project" value="UniProtKB-UniRule"/>
</dbReference>
<dbReference type="GO" id="GO:0015035">
    <property type="term" value="F:protein-disulfide reductase activity"/>
    <property type="evidence" value="ECO:0007669"/>
    <property type="project" value="UniProtKB-UniRule"/>
</dbReference>
<dbReference type="GO" id="GO:0006457">
    <property type="term" value="P:protein folding"/>
    <property type="evidence" value="ECO:0007669"/>
    <property type="project" value="InterPro"/>
</dbReference>
<dbReference type="FunFam" id="1.20.1550.10:FF:000004">
    <property type="entry name" value="Disulfide bond formation protein B"/>
    <property type="match status" value="1"/>
</dbReference>
<dbReference type="Gene3D" id="1.20.1550.10">
    <property type="entry name" value="DsbB-like"/>
    <property type="match status" value="1"/>
</dbReference>
<dbReference type="HAMAP" id="MF_00286">
    <property type="entry name" value="DsbB"/>
    <property type="match status" value="1"/>
</dbReference>
<dbReference type="InterPro" id="IPR003752">
    <property type="entry name" value="DiS_bond_form_DsbB/BdbC"/>
</dbReference>
<dbReference type="InterPro" id="IPR022920">
    <property type="entry name" value="Disulphide_bond_form_DsbB"/>
</dbReference>
<dbReference type="InterPro" id="IPR050183">
    <property type="entry name" value="DsbB"/>
</dbReference>
<dbReference type="InterPro" id="IPR023380">
    <property type="entry name" value="DsbB-like_sf"/>
</dbReference>
<dbReference type="NCBIfam" id="NF003354">
    <property type="entry name" value="PRK04388.1"/>
    <property type="match status" value="1"/>
</dbReference>
<dbReference type="PANTHER" id="PTHR36570">
    <property type="entry name" value="DISULFIDE BOND FORMATION PROTEIN B"/>
    <property type="match status" value="1"/>
</dbReference>
<dbReference type="PANTHER" id="PTHR36570:SF3">
    <property type="entry name" value="DISULFIDE BOND FORMATION PROTEIN B"/>
    <property type="match status" value="1"/>
</dbReference>
<dbReference type="Pfam" id="PF02600">
    <property type="entry name" value="DsbB"/>
    <property type="match status" value="1"/>
</dbReference>
<dbReference type="SUPFAM" id="SSF158442">
    <property type="entry name" value="DsbB-like"/>
    <property type="match status" value="1"/>
</dbReference>
<evidence type="ECO:0000255" key="1">
    <source>
        <dbReference type="HAMAP-Rule" id="MF_00286"/>
    </source>
</evidence>
<evidence type="ECO:0000305" key="2"/>
<accession>Q5H488</accession>
<proteinExistence type="inferred from homology"/>
<sequence>MNPFRWSFRAQFLLGFLACAGLLAYAIYVQLHLGLEPCPLCIFQRIAFAALAVFFLIGALHGPRAAGARKVYGVLSFIAAGVGMGIGARHVWVQIRPKDMMSSCGPPLSFLSETMGPFEVFRTVLTGTGDCGNIDWRFLGLSMPMWSMVWFVGLALWALSAGFKARRSSLHH</sequence>
<protein>
    <recommendedName>
        <fullName evidence="1">Disulfide bond formation protein B</fullName>
    </recommendedName>
    <alternativeName>
        <fullName evidence="1">Disulfide oxidoreductase</fullName>
    </alternativeName>
</protein>
<reference key="1">
    <citation type="journal article" date="2005" name="Nucleic Acids Res.">
        <title>The genome sequence of Xanthomonas oryzae pathovar oryzae KACC10331, the bacterial blight pathogen of rice.</title>
        <authorList>
            <person name="Lee B.-M."/>
            <person name="Park Y.-J."/>
            <person name="Park D.-S."/>
            <person name="Kang H.-W."/>
            <person name="Kim J.-G."/>
            <person name="Song E.-S."/>
            <person name="Park I.-C."/>
            <person name="Yoon U.-H."/>
            <person name="Hahn J.-H."/>
            <person name="Koo B.-S."/>
            <person name="Lee G.-B."/>
            <person name="Kim H."/>
            <person name="Park H.-S."/>
            <person name="Yoon K.-O."/>
            <person name="Kim J.-H."/>
            <person name="Jung C.-H."/>
            <person name="Koh N.-H."/>
            <person name="Seo J.-S."/>
            <person name="Go S.-J."/>
        </authorList>
    </citation>
    <scope>NUCLEOTIDE SEQUENCE [LARGE SCALE GENOMIC DNA]</scope>
    <source>
        <strain>KACC10331 / KXO85</strain>
    </source>
</reference>
<organism>
    <name type="scientific">Xanthomonas oryzae pv. oryzae (strain KACC10331 / KXO85)</name>
    <dbReference type="NCBI Taxonomy" id="291331"/>
    <lineage>
        <taxon>Bacteria</taxon>
        <taxon>Pseudomonadati</taxon>
        <taxon>Pseudomonadota</taxon>
        <taxon>Gammaproteobacteria</taxon>
        <taxon>Lysobacterales</taxon>
        <taxon>Lysobacteraceae</taxon>
        <taxon>Xanthomonas</taxon>
    </lineage>
</organism>
<gene>
    <name evidence="1" type="primary">dsbB</name>
    <name type="ordered locus">XOO0979</name>
</gene>